<protein>
    <recommendedName>
        <fullName>30 kDa antigenic glycoprotein</fullName>
    </recommendedName>
    <alternativeName>
        <fullName>ESGP30</fullName>
    </alternativeName>
</protein>
<keyword id="KW-0325">Glycoprotein</keyword>
<keyword id="KW-0964">Secreted</keyword>
<keyword id="KW-0732">Signal</keyword>
<sequence>GNTYSANNKQQTDIEQLMPKYNSTFAKMNGNYSYKLIWDDSMVSDALQEAKEQYSTNATFKIRRRKVFIKGDNATMEEKVEGALKYPVLRADKFLRRLLWFTHYACNGYYDTKGGHDVLTVACLYREIDYKNSHY</sequence>
<reference key="1">
    <citation type="journal article" date="1990" name="Mol. Biochem. Parasitol.">
        <title>Characterization, cloning and host-protective activity of a 30-kilodalton glycoprotein secreted by the parasitic stages of Trichostrongylus colubriformis.</title>
        <authorList>
            <person name="Savin K.W."/>
            <person name="Dopheide T.A.A."/>
            <person name="Frenkel M.J."/>
            <person name="Wagland B.M."/>
            <person name="Grant W.N."/>
            <person name="Ward C.W."/>
        </authorList>
    </citation>
    <scope>NUCLEOTIDE SEQUENCE [MRNA]</scope>
</reference>
<comment type="subcellular location">
    <subcellularLocation>
        <location>Secreted</location>
    </subcellularLocation>
</comment>
<comment type="similarity">
    <text evidence="2">To H.contortus 15 kDa excretory/secretory protein.</text>
</comment>
<dbReference type="EMBL" id="M32033">
    <property type="protein sequence ID" value="AAA30101.1"/>
    <property type="molecule type" value="mRNA"/>
</dbReference>
<dbReference type="GO" id="GO:0005576">
    <property type="term" value="C:extracellular region"/>
    <property type="evidence" value="ECO:0007669"/>
    <property type="project" value="UniProtKB-SubCell"/>
</dbReference>
<evidence type="ECO:0000255" key="1"/>
<evidence type="ECO:0000305" key="2"/>
<organism>
    <name type="scientific">Trichostrongylus colubriformis</name>
    <name type="common">Black scour worm</name>
    <dbReference type="NCBI Taxonomy" id="6319"/>
    <lineage>
        <taxon>Eukaryota</taxon>
        <taxon>Metazoa</taxon>
        <taxon>Ecdysozoa</taxon>
        <taxon>Nematoda</taxon>
        <taxon>Chromadorea</taxon>
        <taxon>Rhabditida</taxon>
        <taxon>Rhabditina</taxon>
        <taxon>Rhabditomorpha</taxon>
        <taxon>Strongyloidea</taxon>
        <taxon>Trichostrongylidae</taxon>
        <taxon>Trichostrongylus</taxon>
    </lineage>
</organism>
<feature type="signal peptide" evidence="1">
    <location>
        <begin position="1" status="less than"/>
        <end position="5"/>
    </location>
</feature>
<feature type="chain" id="PRO_0000021203" description="30 kDa antigenic glycoprotein">
    <location>
        <begin position="6"/>
        <end position="135"/>
    </location>
</feature>
<feature type="glycosylation site" description="N-linked (GlcNAc...) asparagine" evidence="1">
    <location>
        <position position="22"/>
    </location>
</feature>
<feature type="glycosylation site" description="N-linked (GlcNAc...) asparagine" evidence="1">
    <location>
        <position position="31"/>
    </location>
</feature>
<feature type="glycosylation site" description="N-linked (GlcNAc...) asparagine" evidence="1">
    <location>
        <position position="57"/>
    </location>
</feature>
<feature type="glycosylation site" description="N-linked (GlcNAc...) asparagine" evidence="1">
    <location>
        <position position="73"/>
    </location>
</feature>
<feature type="non-terminal residue">
    <location>
        <position position="1"/>
    </location>
</feature>
<name>ES30_TRICO</name>
<proteinExistence type="evidence at transcript level"/>
<accession>O97391</accession>